<evidence type="ECO:0000255" key="1">
    <source>
        <dbReference type="HAMAP-Rule" id="MF_00451"/>
    </source>
</evidence>
<protein>
    <recommendedName>
        <fullName evidence="1">Nucleoside diphosphate kinase</fullName>
        <shortName evidence="1">NDK</shortName>
        <shortName evidence="1">NDP kinase</shortName>
        <ecNumber evidence="1">2.7.4.6</ecNumber>
    </recommendedName>
    <alternativeName>
        <fullName evidence="1">Nucleoside-2-P kinase</fullName>
    </alternativeName>
</protein>
<feature type="chain" id="PRO_0000137036" description="Nucleoside diphosphate kinase">
    <location>
        <begin position="1"/>
        <end position="140"/>
    </location>
</feature>
<feature type="active site" description="Pros-phosphohistidine intermediate" evidence="1">
    <location>
        <position position="117"/>
    </location>
</feature>
<feature type="binding site" evidence="1">
    <location>
        <position position="11"/>
    </location>
    <ligand>
        <name>ATP</name>
        <dbReference type="ChEBI" id="CHEBI:30616"/>
    </ligand>
</feature>
<feature type="binding site" evidence="1">
    <location>
        <position position="59"/>
    </location>
    <ligand>
        <name>ATP</name>
        <dbReference type="ChEBI" id="CHEBI:30616"/>
    </ligand>
</feature>
<feature type="binding site" evidence="1">
    <location>
        <position position="87"/>
    </location>
    <ligand>
        <name>ATP</name>
        <dbReference type="ChEBI" id="CHEBI:30616"/>
    </ligand>
</feature>
<feature type="binding site" evidence="1">
    <location>
        <position position="93"/>
    </location>
    <ligand>
        <name>ATP</name>
        <dbReference type="ChEBI" id="CHEBI:30616"/>
    </ligand>
</feature>
<feature type="binding site" evidence="1">
    <location>
        <position position="104"/>
    </location>
    <ligand>
        <name>ATP</name>
        <dbReference type="ChEBI" id="CHEBI:30616"/>
    </ligand>
</feature>
<feature type="binding site" evidence="1">
    <location>
        <position position="114"/>
    </location>
    <ligand>
        <name>ATP</name>
        <dbReference type="ChEBI" id="CHEBI:30616"/>
    </ligand>
</feature>
<organism>
    <name type="scientific">Rickettsia typhi (strain ATCC VR-144 / Wilmington)</name>
    <dbReference type="NCBI Taxonomy" id="257363"/>
    <lineage>
        <taxon>Bacteria</taxon>
        <taxon>Pseudomonadati</taxon>
        <taxon>Pseudomonadota</taxon>
        <taxon>Alphaproteobacteria</taxon>
        <taxon>Rickettsiales</taxon>
        <taxon>Rickettsiaceae</taxon>
        <taxon>Rickettsieae</taxon>
        <taxon>Rickettsia</taxon>
        <taxon>typhus group</taxon>
    </lineage>
</organism>
<sequence>MTIQYTFSMIKPDVIKRNKIGQVNTYLENAGLKIVAQKMKFLTKYEAECFYDEHRARPFFNSLVEYITSGAVVLQVLKGEDAITLNRIIMGATNPAEAKEGTIRKDLGESIEANSIHGSDSENSAKREIKFFFSKSEIIE</sequence>
<gene>
    <name evidence="1" type="primary">ndk</name>
    <name type="ordered locus">RT0077</name>
</gene>
<name>NDK_RICTY</name>
<reference key="1">
    <citation type="journal article" date="2004" name="J. Bacteriol.">
        <title>Complete genome sequence of Rickettsia typhi and comparison with sequences of other Rickettsiae.</title>
        <authorList>
            <person name="McLeod M.P."/>
            <person name="Qin X."/>
            <person name="Karpathy S.E."/>
            <person name="Gioia J."/>
            <person name="Highlander S.K."/>
            <person name="Fox G.E."/>
            <person name="McNeill T.Z."/>
            <person name="Jiang H."/>
            <person name="Muzny D."/>
            <person name="Jacob L.S."/>
            <person name="Hawes A.C."/>
            <person name="Sodergren E."/>
            <person name="Gill R."/>
            <person name="Hume J."/>
            <person name="Morgan M."/>
            <person name="Fan G."/>
            <person name="Amin A.G."/>
            <person name="Gibbs R.A."/>
            <person name="Hong C."/>
            <person name="Yu X.-J."/>
            <person name="Walker D.H."/>
            <person name="Weinstock G.M."/>
        </authorList>
    </citation>
    <scope>NUCLEOTIDE SEQUENCE [LARGE SCALE GENOMIC DNA]</scope>
    <source>
        <strain>ATCC VR-144 / Wilmington</strain>
    </source>
</reference>
<accession>Q68XS9</accession>
<keyword id="KW-0067">ATP-binding</keyword>
<keyword id="KW-0963">Cytoplasm</keyword>
<keyword id="KW-0418">Kinase</keyword>
<keyword id="KW-0460">Magnesium</keyword>
<keyword id="KW-0479">Metal-binding</keyword>
<keyword id="KW-0546">Nucleotide metabolism</keyword>
<keyword id="KW-0547">Nucleotide-binding</keyword>
<keyword id="KW-0597">Phosphoprotein</keyword>
<keyword id="KW-0808">Transferase</keyword>
<comment type="function">
    <text evidence="1">Major role in the synthesis of nucleoside triphosphates other than ATP. The ATP gamma phosphate is transferred to the NDP beta phosphate via a ping-pong mechanism, using a phosphorylated active-site intermediate.</text>
</comment>
<comment type="catalytic activity">
    <reaction evidence="1">
        <text>a 2'-deoxyribonucleoside 5'-diphosphate + ATP = a 2'-deoxyribonucleoside 5'-triphosphate + ADP</text>
        <dbReference type="Rhea" id="RHEA:44640"/>
        <dbReference type="ChEBI" id="CHEBI:30616"/>
        <dbReference type="ChEBI" id="CHEBI:61560"/>
        <dbReference type="ChEBI" id="CHEBI:73316"/>
        <dbReference type="ChEBI" id="CHEBI:456216"/>
        <dbReference type="EC" id="2.7.4.6"/>
    </reaction>
</comment>
<comment type="catalytic activity">
    <reaction evidence="1">
        <text>a ribonucleoside 5'-diphosphate + ATP = a ribonucleoside 5'-triphosphate + ADP</text>
        <dbReference type="Rhea" id="RHEA:18113"/>
        <dbReference type="ChEBI" id="CHEBI:30616"/>
        <dbReference type="ChEBI" id="CHEBI:57930"/>
        <dbReference type="ChEBI" id="CHEBI:61557"/>
        <dbReference type="ChEBI" id="CHEBI:456216"/>
        <dbReference type="EC" id="2.7.4.6"/>
    </reaction>
</comment>
<comment type="cofactor">
    <cofactor evidence="1">
        <name>Mg(2+)</name>
        <dbReference type="ChEBI" id="CHEBI:18420"/>
    </cofactor>
</comment>
<comment type="subunit">
    <text evidence="1">Homotetramer.</text>
</comment>
<comment type="subcellular location">
    <subcellularLocation>
        <location evidence="1">Cytoplasm</location>
    </subcellularLocation>
</comment>
<comment type="similarity">
    <text evidence="1">Belongs to the NDK family.</text>
</comment>
<dbReference type="EC" id="2.7.4.6" evidence="1"/>
<dbReference type="EMBL" id="AE017197">
    <property type="protein sequence ID" value="AAU03563.1"/>
    <property type="molecule type" value="Genomic_DNA"/>
</dbReference>
<dbReference type="RefSeq" id="WP_011190550.1">
    <property type="nucleotide sequence ID" value="NC_006142.1"/>
</dbReference>
<dbReference type="SMR" id="Q68XS9"/>
<dbReference type="KEGG" id="rty:RT0077"/>
<dbReference type="eggNOG" id="COG0105">
    <property type="taxonomic scope" value="Bacteria"/>
</dbReference>
<dbReference type="HOGENOM" id="CLU_060216_8_1_5"/>
<dbReference type="OrthoDB" id="9801161at2"/>
<dbReference type="Proteomes" id="UP000000604">
    <property type="component" value="Chromosome"/>
</dbReference>
<dbReference type="GO" id="GO:0005737">
    <property type="term" value="C:cytoplasm"/>
    <property type="evidence" value="ECO:0007669"/>
    <property type="project" value="UniProtKB-SubCell"/>
</dbReference>
<dbReference type="GO" id="GO:0005524">
    <property type="term" value="F:ATP binding"/>
    <property type="evidence" value="ECO:0007669"/>
    <property type="project" value="UniProtKB-UniRule"/>
</dbReference>
<dbReference type="GO" id="GO:0046872">
    <property type="term" value="F:metal ion binding"/>
    <property type="evidence" value="ECO:0007669"/>
    <property type="project" value="UniProtKB-KW"/>
</dbReference>
<dbReference type="GO" id="GO:0004550">
    <property type="term" value="F:nucleoside diphosphate kinase activity"/>
    <property type="evidence" value="ECO:0007669"/>
    <property type="project" value="UniProtKB-UniRule"/>
</dbReference>
<dbReference type="GO" id="GO:0006241">
    <property type="term" value="P:CTP biosynthetic process"/>
    <property type="evidence" value="ECO:0007669"/>
    <property type="project" value="UniProtKB-UniRule"/>
</dbReference>
<dbReference type="GO" id="GO:0006183">
    <property type="term" value="P:GTP biosynthetic process"/>
    <property type="evidence" value="ECO:0007669"/>
    <property type="project" value="UniProtKB-UniRule"/>
</dbReference>
<dbReference type="GO" id="GO:0006228">
    <property type="term" value="P:UTP biosynthetic process"/>
    <property type="evidence" value="ECO:0007669"/>
    <property type="project" value="UniProtKB-UniRule"/>
</dbReference>
<dbReference type="CDD" id="cd04413">
    <property type="entry name" value="NDPk_I"/>
    <property type="match status" value="1"/>
</dbReference>
<dbReference type="FunFam" id="3.30.70.141:FF:000003">
    <property type="entry name" value="Nucleoside diphosphate kinase"/>
    <property type="match status" value="1"/>
</dbReference>
<dbReference type="Gene3D" id="3.30.70.141">
    <property type="entry name" value="Nucleoside diphosphate kinase-like domain"/>
    <property type="match status" value="1"/>
</dbReference>
<dbReference type="HAMAP" id="MF_00451">
    <property type="entry name" value="NDP_kinase"/>
    <property type="match status" value="1"/>
</dbReference>
<dbReference type="InterPro" id="IPR034907">
    <property type="entry name" value="NDK-like_dom"/>
</dbReference>
<dbReference type="InterPro" id="IPR036850">
    <property type="entry name" value="NDK-like_dom_sf"/>
</dbReference>
<dbReference type="InterPro" id="IPR001564">
    <property type="entry name" value="Nucleoside_diP_kinase"/>
</dbReference>
<dbReference type="InterPro" id="IPR023005">
    <property type="entry name" value="Nucleoside_diP_kinase_AS"/>
</dbReference>
<dbReference type="NCBIfam" id="NF001908">
    <property type="entry name" value="PRK00668.1"/>
    <property type="match status" value="1"/>
</dbReference>
<dbReference type="PANTHER" id="PTHR46161">
    <property type="entry name" value="NUCLEOSIDE DIPHOSPHATE KINASE"/>
    <property type="match status" value="1"/>
</dbReference>
<dbReference type="PANTHER" id="PTHR46161:SF3">
    <property type="entry name" value="NUCLEOSIDE DIPHOSPHATE KINASE DDB_G0292928-RELATED"/>
    <property type="match status" value="1"/>
</dbReference>
<dbReference type="Pfam" id="PF00334">
    <property type="entry name" value="NDK"/>
    <property type="match status" value="1"/>
</dbReference>
<dbReference type="PRINTS" id="PR01243">
    <property type="entry name" value="NUCDPKINASE"/>
</dbReference>
<dbReference type="SMART" id="SM00562">
    <property type="entry name" value="NDK"/>
    <property type="match status" value="1"/>
</dbReference>
<dbReference type="SUPFAM" id="SSF54919">
    <property type="entry name" value="Nucleoside diphosphate kinase, NDK"/>
    <property type="match status" value="1"/>
</dbReference>
<dbReference type="PROSITE" id="PS00469">
    <property type="entry name" value="NDPK"/>
    <property type="match status" value="1"/>
</dbReference>
<dbReference type="PROSITE" id="PS51374">
    <property type="entry name" value="NDPK_LIKE"/>
    <property type="match status" value="1"/>
</dbReference>
<proteinExistence type="inferred from homology"/>